<gene>
    <name type="primary">mutA</name>
    <name type="synonym">mcmA</name>
    <name type="ordered locus">PG_1656</name>
</gene>
<reference key="1">
    <citation type="journal article" date="1995" name="Gene">
        <title>Cloning, expression and sequence analysis of the genes encoding the heterodimeric methylmalonyl-CoA mutase of Porphyromonas gingivalis W50.</title>
        <authorList>
            <person name="Jackson C.A."/>
            <person name="Kirzbaum L."/>
            <person name="Dashper S."/>
            <person name="Reynolds E.C."/>
        </authorList>
    </citation>
    <scope>NUCLEOTIDE SEQUENCE [GENOMIC DNA]</scope>
    <source>
        <strain>ATCC 53978 / W50</strain>
    </source>
</reference>
<reference key="2">
    <citation type="journal article" date="2003" name="J. Bacteriol.">
        <title>Complete genome sequence of the oral pathogenic bacterium Porphyromonas gingivalis strain W83.</title>
        <authorList>
            <person name="Nelson K.E."/>
            <person name="Fleischmann R.D."/>
            <person name="DeBoy R.T."/>
            <person name="Paulsen I.T."/>
            <person name="Fouts D.E."/>
            <person name="Eisen J.A."/>
            <person name="Daugherty S.C."/>
            <person name="Dodson R.J."/>
            <person name="Durkin A.S."/>
            <person name="Gwinn M.L."/>
            <person name="Haft D.H."/>
            <person name="Kolonay J.F."/>
            <person name="Nelson W.C."/>
            <person name="Mason T.M."/>
            <person name="Tallon L."/>
            <person name="Gray J."/>
            <person name="Granger D."/>
            <person name="Tettelin H."/>
            <person name="Dong H."/>
            <person name="Galvin J.L."/>
            <person name="Duncan M.J."/>
            <person name="Dewhirst F.E."/>
            <person name="Fraser C.M."/>
        </authorList>
    </citation>
    <scope>NUCLEOTIDE SEQUENCE [LARGE SCALE GENOMIC DNA]</scope>
    <source>
        <strain>ATCC BAA-308 / W83</strain>
    </source>
</reference>
<protein>
    <recommendedName>
        <fullName>Methylmalonyl-CoA mutase small subunit</fullName>
        <ecNumber>5.4.99.2</ecNumber>
    </recommendedName>
    <alternativeName>
        <fullName>MCM-beta</fullName>
    </alternativeName>
</protein>
<name>MUTA_PORGI</name>
<organism>
    <name type="scientific">Porphyromonas gingivalis (strain ATCC BAA-308 / W83)</name>
    <dbReference type="NCBI Taxonomy" id="242619"/>
    <lineage>
        <taxon>Bacteria</taxon>
        <taxon>Pseudomonadati</taxon>
        <taxon>Bacteroidota</taxon>
        <taxon>Bacteroidia</taxon>
        <taxon>Bacteroidales</taxon>
        <taxon>Porphyromonadaceae</taxon>
        <taxon>Porphyromonas</taxon>
    </lineage>
</organism>
<feature type="chain" id="PRO_0000194267" description="Methylmalonyl-CoA mutase small subunit">
    <location>
        <begin position="1"/>
        <end position="618"/>
    </location>
</feature>
<feature type="sequence conflict" description="In Ref. 1; AAB51083." evidence="2" ref="1">
    <original>A</original>
    <variation>R</variation>
    <location>
        <position position="332"/>
    </location>
</feature>
<feature type="sequence conflict" description="In Ref. 1; AAB51083." evidence="2" ref="1">
    <original>HQSV</original>
    <variation>PVG</variation>
    <location>
        <begin position="428"/>
        <end position="431"/>
    </location>
</feature>
<sequence length="618" mass="68739">MAKEKEKLFSEFPPVSREAWIDKITADLKGVPFEKKLVWRTNEGFNVNPFYRREDIEDLKTTTSLPDEYPYVRSTRMHNEWLVRQDIVVGDNVAEANEKALDLLNKGVDSLGFYLKKVHINVDTLAALLKDIELTAVELNFNCCITRAADLLSAFSAYVKKVGADPNKCHGSVSYDPFKKQLVRGVSNPDWVKMTLPVMDAARELPAFRVLNVNAVNLSDAGAFITQELGYALAWGAELLDKLTDAGYKPEEIASRIKFNFGIGSNYFMEIAKFRAARWLWAQIVGSYGDQYKNETAKIHQHATTSMWNKTVFDAHVNLLRTQTETMSAAIAGVDSITVLPFDVTYQQSDDFSERIARNQQLLLKEECHFDKVIDPSAGSYYIETLTNSIGEEAWKLFLSVEDAGGFTQAAETASIQKAVNASNIKRHQSVATRREIFLGTNQFPNFTEVAGDKITLAQGEHDCNCVKSIEPLNFSRGASEFEALRLATEKSGKTPVVFMLTIGNLAMRLARSQFSSNFFGCAGYKLIDNLGFKSVEEGVDAALAAKADIVVLCSSDDEYAEYAPAAFDYLAGRAEFVVAGAPACMADLEAKGIRNYVHVKSNVLETLRAFNDKFGIR</sequence>
<comment type="function">
    <text evidence="1">Catalyzes the isomerization of succinyl-CoA to methylmalonyl-CoA during synthesis of propionate from tricarboxylic acid-cycle intermediates.</text>
</comment>
<comment type="catalytic activity">
    <reaction>
        <text>(R)-methylmalonyl-CoA = succinyl-CoA</text>
        <dbReference type="Rhea" id="RHEA:22888"/>
        <dbReference type="ChEBI" id="CHEBI:57292"/>
        <dbReference type="ChEBI" id="CHEBI:57326"/>
        <dbReference type="EC" id="5.4.99.2"/>
    </reaction>
</comment>
<comment type="cofactor">
    <cofactor evidence="1">
        <name>adenosylcob(III)alamin</name>
        <dbReference type="ChEBI" id="CHEBI:18408"/>
    </cofactor>
</comment>
<comment type="pathway">
    <text>Metabolic intermediate metabolism; propanoyl-CoA degradation; succinyl-CoA from propanoyl-CoA: step 3/3.</text>
</comment>
<comment type="subunit">
    <text>Heterodimer of an alpha and a beta chain.</text>
</comment>
<comment type="similarity">
    <text evidence="2">Belongs to the methylmalonyl-CoA mutase family.</text>
</comment>
<dbReference type="EC" id="5.4.99.2"/>
<dbReference type="EMBL" id="L30136">
    <property type="protein sequence ID" value="AAB51083.1"/>
    <property type="molecule type" value="Genomic_DNA"/>
</dbReference>
<dbReference type="EMBL" id="AE015924">
    <property type="protein sequence ID" value="AAQ66675.1"/>
    <property type="molecule type" value="Genomic_DNA"/>
</dbReference>
<dbReference type="PIR" id="JC4559">
    <property type="entry name" value="JC4559"/>
</dbReference>
<dbReference type="RefSeq" id="WP_005875479.1">
    <property type="nucleotide sequence ID" value="NC_002950.2"/>
</dbReference>
<dbReference type="SMR" id="Q59676"/>
<dbReference type="STRING" id="242619.PG_1656"/>
<dbReference type="EnsemblBacteria" id="AAQ66675">
    <property type="protein sequence ID" value="AAQ66675"/>
    <property type="gene ID" value="PG_1656"/>
</dbReference>
<dbReference type="GeneID" id="29255692"/>
<dbReference type="KEGG" id="pgi:PG_1656"/>
<dbReference type="eggNOG" id="COG1884">
    <property type="taxonomic scope" value="Bacteria"/>
</dbReference>
<dbReference type="HOGENOM" id="CLU_009523_6_0_10"/>
<dbReference type="UniPathway" id="UPA00945">
    <property type="reaction ID" value="UER00910"/>
</dbReference>
<dbReference type="Proteomes" id="UP000000588">
    <property type="component" value="Chromosome"/>
</dbReference>
<dbReference type="GO" id="GO:0031419">
    <property type="term" value="F:cobalamin binding"/>
    <property type="evidence" value="ECO:0007669"/>
    <property type="project" value="UniProtKB-KW"/>
</dbReference>
<dbReference type="GO" id="GO:0046872">
    <property type="term" value="F:metal ion binding"/>
    <property type="evidence" value="ECO:0007669"/>
    <property type="project" value="InterPro"/>
</dbReference>
<dbReference type="GO" id="GO:0004494">
    <property type="term" value="F:methylmalonyl-CoA mutase activity"/>
    <property type="evidence" value="ECO:0007669"/>
    <property type="project" value="UniProtKB-EC"/>
</dbReference>
<dbReference type="GO" id="GO:0019652">
    <property type="term" value="P:lactate fermentation to propionate and acetate"/>
    <property type="evidence" value="ECO:0007669"/>
    <property type="project" value="InterPro"/>
</dbReference>
<dbReference type="CDD" id="cd03677">
    <property type="entry name" value="MM_CoA_mutase_beta"/>
    <property type="match status" value="1"/>
</dbReference>
<dbReference type="Gene3D" id="3.40.50.280">
    <property type="entry name" value="Cobalamin-binding domain"/>
    <property type="match status" value="1"/>
</dbReference>
<dbReference type="Gene3D" id="3.20.20.240">
    <property type="entry name" value="Methylmalonyl-CoA mutase"/>
    <property type="match status" value="1"/>
</dbReference>
<dbReference type="InterPro" id="IPR016176">
    <property type="entry name" value="Cbl-dep_enz_cat"/>
</dbReference>
<dbReference type="InterPro" id="IPR036724">
    <property type="entry name" value="Cobalamin-bd_sf"/>
</dbReference>
<dbReference type="InterPro" id="IPR006099">
    <property type="entry name" value="MeMalonylCoA_mutase_a/b_cat"/>
</dbReference>
<dbReference type="InterPro" id="IPR004608">
    <property type="entry name" value="MMCoA_mutase_b"/>
</dbReference>
<dbReference type="NCBIfam" id="TIGR00642">
    <property type="entry name" value="mmCoA_mut_beta"/>
    <property type="match status" value="1"/>
</dbReference>
<dbReference type="PANTHER" id="PTHR48101:SF1">
    <property type="entry name" value="METHYLMALONYL-COA MUTASE, LARGE SUBUNIT"/>
    <property type="match status" value="1"/>
</dbReference>
<dbReference type="PANTHER" id="PTHR48101">
    <property type="entry name" value="METHYLMALONYL-COA MUTASE, MITOCHONDRIAL-RELATED"/>
    <property type="match status" value="1"/>
</dbReference>
<dbReference type="Pfam" id="PF01642">
    <property type="entry name" value="MM_CoA_mutase"/>
    <property type="match status" value="1"/>
</dbReference>
<dbReference type="SUPFAM" id="SSF52242">
    <property type="entry name" value="Cobalamin (vitamin B12)-binding domain"/>
    <property type="match status" value="1"/>
</dbReference>
<dbReference type="SUPFAM" id="SSF51703">
    <property type="entry name" value="Cobalamin (vitamin B12)-dependent enzymes"/>
    <property type="match status" value="1"/>
</dbReference>
<dbReference type="PROSITE" id="PS00544">
    <property type="entry name" value="METMALONYL_COA_MUTASE"/>
    <property type="match status" value="1"/>
</dbReference>
<accession>Q59676</accession>
<proteinExistence type="inferred from homology"/>
<keyword id="KW-0846">Cobalamin</keyword>
<keyword id="KW-0170">Cobalt</keyword>
<keyword id="KW-0413">Isomerase</keyword>
<keyword id="KW-1185">Reference proteome</keyword>
<evidence type="ECO:0000250" key="1"/>
<evidence type="ECO:0000305" key="2"/>